<keyword id="KW-0560">Oxidoreductase</keyword>
<keyword id="KW-0663">Pyridoxal phosphate</keyword>
<keyword id="KW-1185">Reference proteome</keyword>
<organism>
    <name type="scientific">Nitrosomonas europaea (strain ATCC 19718 / CIP 103999 / KCTC 2705 / NBRC 14298)</name>
    <dbReference type="NCBI Taxonomy" id="228410"/>
    <lineage>
        <taxon>Bacteria</taxon>
        <taxon>Pseudomonadati</taxon>
        <taxon>Pseudomonadota</taxon>
        <taxon>Betaproteobacteria</taxon>
        <taxon>Nitrosomonadales</taxon>
        <taxon>Nitrosomonadaceae</taxon>
        <taxon>Nitrosomonas</taxon>
    </lineage>
</organism>
<evidence type="ECO:0000255" key="1">
    <source>
        <dbReference type="HAMAP-Rule" id="MF_00713"/>
    </source>
</evidence>
<evidence type="ECO:0000256" key="2">
    <source>
        <dbReference type="SAM" id="MobiDB-lite"/>
    </source>
</evidence>
<proteinExistence type="inferred from homology"/>
<feature type="chain" id="PRO_0000167008" description="Probable glycine dehydrogenase (decarboxylating) subunit 2">
    <location>
        <begin position="1"/>
        <end position="483"/>
    </location>
</feature>
<feature type="region of interest" description="Disordered" evidence="2">
    <location>
        <begin position="1"/>
        <end position="33"/>
    </location>
</feature>
<feature type="modified residue" description="N6-(pyridoxal phosphate)lysine" evidence="1">
    <location>
        <position position="264"/>
    </location>
</feature>
<comment type="function">
    <text evidence="1">The glycine cleavage system catalyzes the degradation of glycine. The P protein binds the alpha-amino group of glycine through its pyridoxal phosphate cofactor; CO(2) is released and the remaining methylamine moiety is then transferred to the lipoamide cofactor of the H protein.</text>
</comment>
<comment type="catalytic activity">
    <reaction evidence="1">
        <text>N(6)-[(R)-lipoyl]-L-lysyl-[glycine-cleavage complex H protein] + glycine + H(+) = N(6)-[(R)-S(8)-aminomethyldihydrolipoyl]-L-lysyl-[glycine-cleavage complex H protein] + CO2</text>
        <dbReference type="Rhea" id="RHEA:24304"/>
        <dbReference type="Rhea" id="RHEA-COMP:10494"/>
        <dbReference type="Rhea" id="RHEA-COMP:10495"/>
        <dbReference type="ChEBI" id="CHEBI:15378"/>
        <dbReference type="ChEBI" id="CHEBI:16526"/>
        <dbReference type="ChEBI" id="CHEBI:57305"/>
        <dbReference type="ChEBI" id="CHEBI:83099"/>
        <dbReference type="ChEBI" id="CHEBI:83143"/>
        <dbReference type="EC" id="1.4.4.2"/>
    </reaction>
</comment>
<comment type="cofactor">
    <cofactor evidence="1">
        <name>pyridoxal 5'-phosphate</name>
        <dbReference type="ChEBI" id="CHEBI:597326"/>
    </cofactor>
</comment>
<comment type="subunit">
    <text evidence="1">The glycine cleavage system is composed of four proteins: P, T, L and H. In this organism, the P 'protein' is a heterodimer of two subunits.</text>
</comment>
<comment type="similarity">
    <text evidence="1">Belongs to the GcvP family. C-terminal subunit subfamily.</text>
</comment>
<accession>Q82WQ3</accession>
<dbReference type="EC" id="1.4.4.2" evidence="1"/>
<dbReference type="EMBL" id="AL954747">
    <property type="protein sequence ID" value="CAD84521.1"/>
    <property type="molecule type" value="Genomic_DNA"/>
</dbReference>
<dbReference type="RefSeq" id="WP_011111236.1">
    <property type="nucleotide sequence ID" value="NC_004757.1"/>
</dbReference>
<dbReference type="SMR" id="Q82WQ3"/>
<dbReference type="STRING" id="228410.NE0610"/>
<dbReference type="GeneID" id="87103809"/>
<dbReference type="KEGG" id="neu:NE0610"/>
<dbReference type="eggNOG" id="COG1003">
    <property type="taxonomic scope" value="Bacteria"/>
</dbReference>
<dbReference type="HOGENOM" id="CLU_004620_5_0_4"/>
<dbReference type="OrthoDB" id="9801272at2"/>
<dbReference type="PhylomeDB" id="Q82WQ3"/>
<dbReference type="Proteomes" id="UP000001416">
    <property type="component" value="Chromosome"/>
</dbReference>
<dbReference type="GO" id="GO:0005829">
    <property type="term" value="C:cytosol"/>
    <property type="evidence" value="ECO:0007669"/>
    <property type="project" value="TreeGrafter"/>
</dbReference>
<dbReference type="GO" id="GO:0005960">
    <property type="term" value="C:glycine cleavage complex"/>
    <property type="evidence" value="ECO:0007669"/>
    <property type="project" value="TreeGrafter"/>
</dbReference>
<dbReference type="GO" id="GO:0016594">
    <property type="term" value="F:glycine binding"/>
    <property type="evidence" value="ECO:0007669"/>
    <property type="project" value="TreeGrafter"/>
</dbReference>
<dbReference type="GO" id="GO:0004375">
    <property type="term" value="F:glycine dehydrogenase (decarboxylating) activity"/>
    <property type="evidence" value="ECO:0007669"/>
    <property type="project" value="UniProtKB-EC"/>
</dbReference>
<dbReference type="GO" id="GO:0030170">
    <property type="term" value="F:pyridoxal phosphate binding"/>
    <property type="evidence" value="ECO:0007669"/>
    <property type="project" value="TreeGrafter"/>
</dbReference>
<dbReference type="GO" id="GO:0019464">
    <property type="term" value="P:glycine decarboxylation via glycine cleavage system"/>
    <property type="evidence" value="ECO:0007669"/>
    <property type="project" value="UniProtKB-UniRule"/>
</dbReference>
<dbReference type="FunFam" id="3.40.640.10:FF:000224">
    <property type="entry name" value="Probable glycine dehydrogenase (decarboxylating) subunit 2"/>
    <property type="match status" value="1"/>
</dbReference>
<dbReference type="FunFam" id="3.90.1150.10:FF:000014">
    <property type="entry name" value="Probable glycine dehydrogenase (decarboxylating) subunit 2"/>
    <property type="match status" value="1"/>
</dbReference>
<dbReference type="Gene3D" id="6.20.440.10">
    <property type="match status" value="1"/>
</dbReference>
<dbReference type="Gene3D" id="3.90.1150.10">
    <property type="entry name" value="Aspartate Aminotransferase, domain 1"/>
    <property type="match status" value="1"/>
</dbReference>
<dbReference type="Gene3D" id="3.40.640.10">
    <property type="entry name" value="Type I PLP-dependent aspartate aminotransferase-like (Major domain)"/>
    <property type="match status" value="1"/>
</dbReference>
<dbReference type="HAMAP" id="MF_00713">
    <property type="entry name" value="GcvPB"/>
    <property type="match status" value="1"/>
</dbReference>
<dbReference type="InterPro" id="IPR000192">
    <property type="entry name" value="Aminotrans_V_dom"/>
</dbReference>
<dbReference type="InterPro" id="IPR023012">
    <property type="entry name" value="GcvPB"/>
</dbReference>
<dbReference type="InterPro" id="IPR049316">
    <property type="entry name" value="GDC-P_C"/>
</dbReference>
<dbReference type="InterPro" id="IPR020581">
    <property type="entry name" value="GDC_P"/>
</dbReference>
<dbReference type="InterPro" id="IPR015424">
    <property type="entry name" value="PyrdxlP-dep_Trfase"/>
</dbReference>
<dbReference type="InterPro" id="IPR015421">
    <property type="entry name" value="PyrdxlP-dep_Trfase_major"/>
</dbReference>
<dbReference type="InterPro" id="IPR015422">
    <property type="entry name" value="PyrdxlP-dep_Trfase_small"/>
</dbReference>
<dbReference type="NCBIfam" id="NF003346">
    <property type="entry name" value="PRK04366.1"/>
    <property type="match status" value="1"/>
</dbReference>
<dbReference type="PANTHER" id="PTHR11773:SF1">
    <property type="entry name" value="GLYCINE DEHYDROGENASE (DECARBOXYLATING), MITOCHONDRIAL"/>
    <property type="match status" value="1"/>
</dbReference>
<dbReference type="PANTHER" id="PTHR11773">
    <property type="entry name" value="GLYCINE DEHYDROGENASE, DECARBOXYLATING"/>
    <property type="match status" value="1"/>
</dbReference>
<dbReference type="Pfam" id="PF00266">
    <property type="entry name" value="Aminotran_5"/>
    <property type="match status" value="1"/>
</dbReference>
<dbReference type="Pfam" id="PF21478">
    <property type="entry name" value="GcvP2_C"/>
    <property type="match status" value="1"/>
</dbReference>
<dbReference type="SUPFAM" id="SSF53383">
    <property type="entry name" value="PLP-dependent transferases"/>
    <property type="match status" value="1"/>
</dbReference>
<gene>
    <name evidence="1" type="primary">gcvPB</name>
    <name type="ordered locus">NE0610</name>
</gene>
<reference key="1">
    <citation type="journal article" date="2003" name="J. Bacteriol.">
        <title>Complete genome sequence of the ammonia-oxidizing bacterium and obligate chemolithoautotroph Nitrosomonas europaea.</title>
        <authorList>
            <person name="Chain P."/>
            <person name="Lamerdin J.E."/>
            <person name="Larimer F.W."/>
            <person name="Regala W."/>
            <person name="Lao V."/>
            <person name="Land M.L."/>
            <person name="Hauser L."/>
            <person name="Hooper A.B."/>
            <person name="Klotz M.G."/>
            <person name="Norton J."/>
            <person name="Sayavedra-Soto L.A."/>
            <person name="Arciero D.M."/>
            <person name="Hommes N.G."/>
            <person name="Whittaker M.M."/>
            <person name="Arp D.J."/>
        </authorList>
    </citation>
    <scope>NUCLEOTIDE SEQUENCE [LARGE SCALE GENOMIC DNA]</scope>
    <source>
        <strain>ATCC 19718 / CIP 103999 / KCTC 2705 / NBRC 14298</strain>
    </source>
</reference>
<sequence>MLIFEHSRKNRRNYSQAPATRPAKNNIPDHLKRKSTPLLPEVSEMDTVRHYTRLSQKNFSIDTEFYPLGSCTMKYNPRACNSLAMLPQFLSRHPLAPEDTGQGFLACMYELQEILKDITGMAAVSLTSMAGAQGELIGITMIRAYHEAHGDTGRTEIIIPDAAHGTNPATAVMCGYKVIEIPTNRDGDVDMDALKAAVGPKTAGLMLTNPSTLGVFEKKVAEMSRIVHAAGGLLYYDGANLNAVLGKVKPGDMGFDVIHMNLHKTFSTPHGGGGPGAAPVGVAERLLPYLPVPIVAHEQGVYRWLTEEDRPQTIGRLSAHMGNAGVLLRAYIYVRLLGAEGMHRISEYATLNANYLMAELRKLGFEIAYPNRRASHEFIVTMKEIKDRTGVTAMNLAKRLLDKGFHAPTTYFPLLVPECLLIEPAETESKETLDRFVAAMKEILDEIATQPDMVKAAPHDMPLRKIDDVKAARELDLVWDPAG</sequence>
<protein>
    <recommendedName>
        <fullName evidence="1">Probable glycine dehydrogenase (decarboxylating) subunit 2</fullName>
        <ecNumber evidence="1">1.4.4.2</ecNumber>
    </recommendedName>
    <alternativeName>
        <fullName evidence="1">Glycine cleavage system P-protein subunit 2</fullName>
    </alternativeName>
    <alternativeName>
        <fullName evidence="1">Glycine decarboxylase subunit 2</fullName>
    </alternativeName>
    <alternativeName>
        <fullName evidence="1">Glycine dehydrogenase (aminomethyl-transferring) subunit 2</fullName>
    </alternativeName>
</protein>
<name>GCSPB_NITEU</name>